<keyword id="KW-0067">ATP-binding</keyword>
<keyword id="KW-0418">Kinase</keyword>
<keyword id="KW-0460">Magnesium</keyword>
<keyword id="KW-0547">Nucleotide-binding</keyword>
<keyword id="KW-1185">Reference proteome</keyword>
<keyword id="KW-0808">Transferase</keyword>
<dbReference type="EC" id="2.7.1.35" evidence="1"/>
<dbReference type="EMBL" id="AE004439">
    <property type="protein sequence ID" value="AAK02374.1"/>
    <property type="molecule type" value="Genomic_DNA"/>
</dbReference>
<dbReference type="RefSeq" id="WP_005721193.1">
    <property type="nucleotide sequence ID" value="NC_002663.1"/>
</dbReference>
<dbReference type="SMR" id="Q9CNY1"/>
<dbReference type="STRING" id="272843.PM0290"/>
<dbReference type="EnsemblBacteria" id="AAK02374">
    <property type="protein sequence ID" value="AAK02374"/>
    <property type="gene ID" value="PM0290"/>
</dbReference>
<dbReference type="KEGG" id="pmu:PM0290"/>
<dbReference type="HOGENOM" id="CLU_046496_3_0_6"/>
<dbReference type="OrthoDB" id="9800808at2"/>
<dbReference type="UniPathway" id="UPA01068">
    <property type="reaction ID" value="UER00298"/>
</dbReference>
<dbReference type="Proteomes" id="UP000000809">
    <property type="component" value="Chromosome"/>
</dbReference>
<dbReference type="GO" id="GO:0005829">
    <property type="term" value="C:cytosol"/>
    <property type="evidence" value="ECO:0007669"/>
    <property type="project" value="TreeGrafter"/>
</dbReference>
<dbReference type="GO" id="GO:0005524">
    <property type="term" value="F:ATP binding"/>
    <property type="evidence" value="ECO:0007669"/>
    <property type="project" value="UniProtKB-UniRule"/>
</dbReference>
<dbReference type="GO" id="GO:0000287">
    <property type="term" value="F:magnesium ion binding"/>
    <property type="evidence" value="ECO:0007669"/>
    <property type="project" value="UniProtKB-UniRule"/>
</dbReference>
<dbReference type="GO" id="GO:0008478">
    <property type="term" value="F:pyridoxal kinase activity"/>
    <property type="evidence" value="ECO:0007669"/>
    <property type="project" value="UniProtKB-UniRule"/>
</dbReference>
<dbReference type="GO" id="GO:0009443">
    <property type="term" value="P:pyridoxal 5'-phosphate salvage"/>
    <property type="evidence" value="ECO:0007669"/>
    <property type="project" value="UniProtKB-UniRule"/>
</dbReference>
<dbReference type="CDD" id="cd01173">
    <property type="entry name" value="pyridoxal_pyridoxamine_kinase"/>
    <property type="match status" value="1"/>
</dbReference>
<dbReference type="FunFam" id="3.40.1190.20:FF:000008">
    <property type="entry name" value="Pyridoxal kinase PdxY"/>
    <property type="match status" value="1"/>
</dbReference>
<dbReference type="Gene3D" id="3.40.1190.20">
    <property type="match status" value="1"/>
</dbReference>
<dbReference type="HAMAP" id="MF_01639">
    <property type="entry name" value="PdxY"/>
    <property type="match status" value="1"/>
</dbReference>
<dbReference type="InterPro" id="IPR013749">
    <property type="entry name" value="PM/HMP-P_kinase-1"/>
</dbReference>
<dbReference type="InterPro" id="IPR004625">
    <property type="entry name" value="PyrdxlKinase"/>
</dbReference>
<dbReference type="InterPro" id="IPR023685">
    <property type="entry name" value="Pyridoxal_kinase_PdxY"/>
</dbReference>
<dbReference type="InterPro" id="IPR029056">
    <property type="entry name" value="Ribokinase-like"/>
</dbReference>
<dbReference type="NCBIfam" id="NF004398">
    <property type="entry name" value="PRK05756.1"/>
    <property type="match status" value="1"/>
</dbReference>
<dbReference type="NCBIfam" id="TIGR00687">
    <property type="entry name" value="pyridox_kin"/>
    <property type="match status" value="1"/>
</dbReference>
<dbReference type="PANTHER" id="PTHR10534">
    <property type="entry name" value="PYRIDOXAL KINASE"/>
    <property type="match status" value="1"/>
</dbReference>
<dbReference type="PANTHER" id="PTHR10534:SF2">
    <property type="entry name" value="PYRIDOXAL KINASE"/>
    <property type="match status" value="1"/>
</dbReference>
<dbReference type="Pfam" id="PF08543">
    <property type="entry name" value="Phos_pyr_kin"/>
    <property type="match status" value="1"/>
</dbReference>
<dbReference type="SUPFAM" id="SSF53613">
    <property type="entry name" value="Ribokinase-like"/>
    <property type="match status" value="1"/>
</dbReference>
<comment type="function">
    <text evidence="1">Pyridoxal kinase involved in the salvage pathway of pyridoxal 5'-phosphate (PLP). Catalyzes the phosphorylation of pyridoxal to PLP.</text>
</comment>
<comment type="catalytic activity">
    <reaction evidence="1">
        <text>pyridoxal + ATP = pyridoxal 5'-phosphate + ADP + H(+)</text>
        <dbReference type="Rhea" id="RHEA:10224"/>
        <dbReference type="ChEBI" id="CHEBI:15378"/>
        <dbReference type="ChEBI" id="CHEBI:17310"/>
        <dbReference type="ChEBI" id="CHEBI:30616"/>
        <dbReference type="ChEBI" id="CHEBI:456216"/>
        <dbReference type="ChEBI" id="CHEBI:597326"/>
        <dbReference type="EC" id="2.7.1.35"/>
    </reaction>
</comment>
<comment type="cofactor">
    <cofactor evidence="1">
        <name>Mg(2+)</name>
        <dbReference type="ChEBI" id="CHEBI:18420"/>
    </cofactor>
</comment>
<comment type="pathway">
    <text evidence="1">Cofactor metabolism; pyridoxal 5'-phosphate salvage; pyridoxal 5'-phosphate from pyridoxal: step 1/1.</text>
</comment>
<comment type="subunit">
    <text evidence="1">Homodimer.</text>
</comment>
<comment type="similarity">
    <text evidence="1">Belongs to the pyridoxine kinase family. PdxY subfamily.</text>
</comment>
<reference key="1">
    <citation type="journal article" date="2001" name="Proc. Natl. Acad. Sci. U.S.A.">
        <title>Complete genomic sequence of Pasteurella multocida Pm70.</title>
        <authorList>
            <person name="May B.J."/>
            <person name="Zhang Q."/>
            <person name="Li L.L."/>
            <person name="Paustian M.L."/>
            <person name="Whittam T.S."/>
            <person name="Kapur V."/>
        </authorList>
    </citation>
    <scope>NUCLEOTIDE SEQUENCE [LARGE SCALE GENOMIC DNA]</scope>
    <source>
        <strain>Pm70</strain>
    </source>
</reference>
<sequence length="286" mass="31349">MKHVLSIQSHVVYGYAGNKSATFPMQLLGVDVWALNTVQFSNHTQYGKWTGMVIPKEQIGEIVRGIDAIEALHLCDAIVSGYIGSAEQVEEIVNAVRFIKSKNPNALYLCDPVMGHPDKGCIVAEGVKEGLINLAMAEADLITPNLVELRELSGLPVENFAQAQDAVRAILAKGPKKVLVKHLSKVGKDSSQFEMLLATKDGMWHISRPLHQFRKEPVGVGDLTAGLFIANLLNGKSDIEAFEHTANAVNDVMTVTQQKDNYELQIIAAREYIMQPSSQYKAVKIA</sequence>
<proteinExistence type="inferred from homology"/>
<feature type="chain" id="PRO_0000269815" description="Pyridoxal kinase PdxY">
    <location>
        <begin position="1"/>
        <end position="286"/>
    </location>
</feature>
<feature type="binding site" evidence="1">
    <location>
        <position position="9"/>
    </location>
    <ligand>
        <name>substrate</name>
    </ligand>
</feature>
<feature type="binding site" evidence="1">
    <location>
        <begin position="44"/>
        <end position="45"/>
    </location>
    <ligand>
        <name>substrate</name>
    </ligand>
</feature>
<feature type="binding site" evidence="1">
    <location>
        <position position="111"/>
    </location>
    <ligand>
        <name>ATP</name>
        <dbReference type="ChEBI" id="CHEBI:30616"/>
    </ligand>
</feature>
<feature type="binding site" evidence="1">
    <location>
        <position position="148"/>
    </location>
    <ligand>
        <name>ATP</name>
        <dbReference type="ChEBI" id="CHEBI:30616"/>
    </ligand>
</feature>
<feature type="binding site" evidence="1">
    <location>
        <position position="181"/>
    </location>
    <ligand>
        <name>ATP</name>
        <dbReference type="ChEBI" id="CHEBI:30616"/>
    </ligand>
</feature>
<feature type="binding site" evidence="1">
    <location>
        <position position="222"/>
    </location>
    <ligand>
        <name>substrate</name>
    </ligand>
</feature>
<name>PDXY_PASMU</name>
<protein>
    <recommendedName>
        <fullName evidence="1">Pyridoxal kinase PdxY</fullName>
        <shortName evidence="1">PL kinase</shortName>
        <ecNumber evidence="1">2.7.1.35</ecNumber>
    </recommendedName>
</protein>
<organism>
    <name type="scientific">Pasteurella multocida (strain Pm70)</name>
    <dbReference type="NCBI Taxonomy" id="272843"/>
    <lineage>
        <taxon>Bacteria</taxon>
        <taxon>Pseudomonadati</taxon>
        <taxon>Pseudomonadota</taxon>
        <taxon>Gammaproteobacteria</taxon>
        <taxon>Pasteurellales</taxon>
        <taxon>Pasteurellaceae</taxon>
        <taxon>Pasteurella</taxon>
    </lineage>
</organism>
<gene>
    <name evidence="1" type="primary">pdxY</name>
    <name type="ordered locus">PM0290</name>
</gene>
<accession>Q9CNY1</accession>
<evidence type="ECO:0000255" key="1">
    <source>
        <dbReference type="HAMAP-Rule" id="MF_01639"/>
    </source>
</evidence>